<feature type="chain" id="PRO_0000239730" description="NADPH-dependent oxidoreductase">
    <location>
        <begin position="1"/>
        <end position="251"/>
    </location>
</feature>
<proteinExistence type="inferred from homology"/>
<gene>
    <name type="primary">nfrA</name>
    <name type="ordered locus">SH2590</name>
</gene>
<sequence length="251" mass="28492">MSDYVYDLMKKHHSVRQFKDKALSDETVQKLVEAGQSASTSSYLQTYSIIGVDDPEIKKQLKEVSGQPYVVDNGYLFVFVLDYYRHNLINENVDFDMQTSFESAEGLLVGAIDVALVSENVALAAEDMGYGIVYLGSLRNDVARVKEILDLPEYAFPLFGMAVGEPADDENGAPKPRLPFEHVFHKNVYNSNAKEQREAIQKYDEEISEYYKERTNGKRQETWSQQVAGFLSGKTRLDMLEELNKSGLMKK</sequence>
<dbReference type="EC" id="1.6.-.-"/>
<dbReference type="EMBL" id="AP006716">
    <property type="protein sequence ID" value="BAE05899.1"/>
    <property type="molecule type" value="Genomic_DNA"/>
</dbReference>
<dbReference type="RefSeq" id="WP_011276836.1">
    <property type="nucleotide sequence ID" value="NC_007168.1"/>
</dbReference>
<dbReference type="SMR" id="Q4L378"/>
<dbReference type="GeneID" id="93781824"/>
<dbReference type="KEGG" id="sha:SH2590"/>
<dbReference type="eggNOG" id="COG0778">
    <property type="taxonomic scope" value="Bacteria"/>
</dbReference>
<dbReference type="HOGENOM" id="CLU_070764_0_0_9"/>
<dbReference type="OrthoDB" id="9775805at2"/>
<dbReference type="Proteomes" id="UP000000543">
    <property type="component" value="Chromosome"/>
</dbReference>
<dbReference type="GO" id="GO:0016491">
    <property type="term" value="F:oxidoreductase activity"/>
    <property type="evidence" value="ECO:0007669"/>
    <property type="project" value="UniProtKB-KW"/>
</dbReference>
<dbReference type="CDD" id="cd02146">
    <property type="entry name" value="NfsA-like"/>
    <property type="match status" value="1"/>
</dbReference>
<dbReference type="Gene3D" id="3.40.109.10">
    <property type="entry name" value="NADH Oxidase"/>
    <property type="match status" value="1"/>
</dbReference>
<dbReference type="InterPro" id="IPR016446">
    <property type="entry name" value="Flavin_OxRdtase_Frp"/>
</dbReference>
<dbReference type="InterPro" id="IPR029479">
    <property type="entry name" value="Nitroreductase"/>
</dbReference>
<dbReference type="InterPro" id="IPR000415">
    <property type="entry name" value="Nitroreductase-like"/>
</dbReference>
<dbReference type="NCBIfam" id="NF008033">
    <property type="entry name" value="PRK10765.1"/>
    <property type="match status" value="1"/>
</dbReference>
<dbReference type="PANTHER" id="PTHR43425:SF3">
    <property type="entry name" value="NADPH-DEPENDENT OXIDOREDUCTASE"/>
    <property type="match status" value="1"/>
</dbReference>
<dbReference type="PANTHER" id="PTHR43425">
    <property type="entry name" value="OXYGEN-INSENSITIVE NADPH NITROREDUCTASE"/>
    <property type="match status" value="1"/>
</dbReference>
<dbReference type="Pfam" id="PF00881">
    <property type="entry name" value="Nitroreductase"/>
    <property type="match status" value="1"/>
</dbReference>
<dbReference type="PIRSF" id="PIRSF005426">
    <property type="entry name" value="Frp"/>
    <property type="match status" value="1"/>
</dbReference>
<dbReference type="SUPFAM" id="SSF55469">
    <property type="entry name" value="FMN-dependent nitroreductase-like"/>
    <property type="match status" value="1"/>
</dbReference>
<accession>Q4L378</accession>
<keyword id="KW-0285">Flavoprotein</keyword>
<keyword id="KW-0288">FMN</keyword>
<keyword id="KW-0521">NADP</keyword>
<keyword id="KW-0560">Oxidoreductase</keyword>
<reference key="1">
    <citation type="journal article" date="2005" name="J. Bacteriol.">
        <title>Whole-genome sequencing of Staphylococcus haemolyticus uncovers the extreme plasticity of its genome and the evolution of human-colonizing staphylococcal species.</title>
        <authorList>
            <person name="Takeuchi F."/>
            <person name="Watanabe S."/>
            <person name="Baba T."/>
            <person name="Yuzawa H."/>
            <person name="Ito T."/>
            <person name="Morimoto Y."/>
            <person name="Kuroda M."/>
            <person name="Cui L."/>
            <person name="Takahashi M."/>
            <person name="Ankai A."/>
            <person name="Baba S."/>
            <person name="Fukui S."/>
            <person name="Lee J.C."/>
            <person name="Hiramatsu K."/>
        </authorList>
    </citation>
    <scope>NUCLEOTIDE SEQUENCE [LARGE SCALE GENOMIC DNA]</scope>
    <source>
        <strain>JCSC1435</strain>
    </source>
</reference>
<organism>
    <name type="scientific">Staphylococcus haemolyticus (strain JCSC1435)</name>
    <dbReference type="NCBI Taxonomy" id="279808"/>
    <lineage>
        <taxon>Bacteria</taxon>
        <taxon>Bacillati</taxon>
        <taxon>Bacillota</taxon>
        <taxon>Bacilli</taxon>
        <taxon>Bacillales</taxon>
        <taxon>Staphylococcaceae</taxon>
        <taxon>Staphylococcus</taxon>
    </lineage>
</organism>
<protein>
    <recommendedName>
        <fullName>NADPH-dependent oxidoreductase</fullName>
        <ecNumber>1.6.-.-</ecNumber>
    </recommendedName>
</protein>
<comment type="function">
    <text evidence="1">Reduces FMN, organic nitro compounds and disulfide DTNB. Involved in maintenance of the cellular redox state and the disulfide stress response (By similarity).</text>
</comment>
<comment type="cofactor">
    <cofactor evidence="1">
        <name>FMN</name>
        <dbReference type="ChEBI" id="CHEBI:58210"/>
    </cofactor>
</comment>
<comment type="similarity">
    <text evidence="2">Belongs to the flavin oxidoreductase frp family.</text>
</comment>
<evidence type="ECO:0000250" key="1"/>
<evidence type="ECO:0000305" key="2"/>
<name>NFRA_STAHJ</name>